<name>PDXT_CORDI</name>
<feature type="chain" id="PRO_0000135635" description="Pyridoxal 5'-phosphate synthase subunit PdxT">
    <location>
        <begin position="1"/>
        <end position="185"/>
    </location>
</feature>
<feature type="active site" description="Nucleophile" evidence="1">
    <location>
        <position position="78"/>
    </location>
</feature>
<feature type="active site" description="Charge relay system" evidence="1">
    <location>
        <position position="168"/>
    </location>
</feature>
<feature type="active site" description="Charge relay system" evidence="1">
    <location>
        <position position="170"/>
    </location>
</feature>
<feature type="binding site" evidence="1">
    <location>
        <begin position="46"/>
        <end position="48"/>
    </location>
    <ligand>
        <name>L-glutamine</name>
        <dbReference type="ChEBI" id="CHEBI:58359"/>
    </ligand>
</feature>
<feature type="binding site" evidence="1">
    <location>
        <position position="106"/>
    </location>
    <ligand>
        <name>L-glutamine</name>
        <dbReference type="ChEBI" id="CHEBI:58359"/>
    </ligand>
</feature>
<feature type="binding site" evidence="1">
    <location>
        <begin position="132"/>
        <end position="133"/>
    </location>
    <ligand>
        <name>L-glutamine</name>
        <dbReference type="ChEBI" id="CHEBI:58359"/>
    </ligand>
</feature>
<gene>
    <name evidence="1" type="primary">pdxT</name>
    <name type="ordered locus">DIP0228</name>
</gene>
<keyword id="KW-0315">Glutamine amidotransferase</keyword>
<keyword id="KW-0378">Hydrolase</keyword>
<keyword id="KW-0456">Lyase</keyword>
<keyword id="KW-0663">Pyridoxal phosphate</keyword>
<keyword id="KW-1185">Reference proteome</keyword>
<protein>
    <recommendedName>
        <fullName evidence="1">Pyridoxal 5'-phosphate synthase subunit PdxT</fullName>
        <ecNumber evidence="1">4.3.3.6</ecNumber>
    </recommendedName>
    <alternativeName>
        <fullName evidence="1">Pdx2</fullName>
    </alternativeName>
    <alternativeName>
        <fullName evidence="1">Pyridoxal 5'-phosphate synthase glutaminase subunit</fullName>
        <ecNumber evidence="1">3.5.1.2</ecNumber>
    </alternativeName>
</protein>
<comment type="function">
    <text evidence="1">Catalyzes the hydrolysis of glutamine to glutamate and ammonia as part of the biosynthesis of pyridoxal 5'-phosphate. The resulting ammonia molecule is channeled to the active site of PdxS.</text>
</comment>
<comment type="catalytic activity">
    <reaction evidence="1">
        <text>aldehydo-D-ribose 5-phosphate + D-glyceraldehyde 3-phosphate + L-glutamine = pyridoxal 5'-phosphate + L-glutamate + phosphate + 3 H2O + H(+)</text>
        <dbReference type="Rhea" id="RHEA:31507"/>
        <dbReference type="ChEBI" id="CHEBI:15377"/>
        <dbReference type="ChEBI" id="CHEBI:15378"/>
        <dbReference type="ChEBI" id="CHEBI:29985"/>
        <dbReference type="ChEBI" id="CHEBI:43474"/>
        <dbReference type="ChEBI" id="CHEBI:58273"/>
        <dbReference type="ChEBI" id="CHEBI:58359"/>
        <dbReference type="ChEBI" id="CHEBI:59776"/>
        <dbReference type="ChEBI" id="CHEBI:597326"/>
        <dbReference type="EC" id="4.3.3.6"/>
    </reaction>
</comment>
<comment type="catalytic activity">
    <reaction evidence="1">
        <text>L-glutamine + H2O = L-glutamate + NH4(+)</text>
        <dbReference type="Rhea" id="RHEA:15889"/>
        <dbReference type="ChEBI" id="CHEBI:15377"/>
        <dbReference type="ChEBI" id="CHEBI:28938"/>
        <dbReference type="ChEBI" id="CHEBI:29985"/>
        <dbReference type="ChEBI" id="CHEBI:58359"/>
        <dbReference type="EC" id="3.5.1.2"/>
    </reaction>
</comment>
<comment type="pathway">
    <text evidence="1">Cofactor biosynthesis; pyridoxal 5'-phosphate biosynthesis.</text>
</comment>
<comment type="subunit">
    <text evidence="1">In the presence of PdxS, forms a dodecamer of heterodimers. Only shows activity in the heterodimer.</text>
</comment>
<comment type="similarity">
    <text evidence="1">Belongs to the glutaminase PdxT/SNO family.</text>
</comment>
<accession>Q6NK10</accession>
<sequence>MVIGVLTLQGGFAEHIAILESLGVEHRRVRVPNDLLGLDGLIIPGGESTVMDKLARAFDLAEPLRAAINNGLPVFATCAGLIYLGTVENPAKGQQTLGCLDVVVRRNAFGRQVDSFDAVVDVEGIDANVAFIRAPEVISCGAGVTVTARVGDHVVGVRQGKIHAYAFHPESAGEVRLHQAWLASI</sequence>
<reference key="1">
    <citation type="journal article" date="2003" name="Nucleic Acids Res.">
        <title>The complete genome sequence and analysis of Corynebacterium diphtheriae NCTC13129.</title>
        <authorList>
            <person name="Cerdeno-Tarraga A.-M."/>
            <person name="Efstratiou A."/>
            <person name="Dover L.G."/>
            <person name="Holden M.T.G."/>
            <person name="Pallen M.J."/>
            <person name="Bentley S.D."/>
            <person name="Besra G.S."/>
            <person name="Churcher C.M."/>
            <person name="James K.D."/>
            <person name="De Zoysa A."/>
            <person name="Chillingworth T."/>
            <person name="Cronin A."/>
            <person name="Dowd L."/>
            <person name="Feltwell T."/>
            <person name="Hamlin N."/>
            <person name="Holroyd S."/>
            <person name="Jagels K."/>
            <person name="Moule S."/>
            <person name="Quail M.A."/>
            <person name="Rabbinowitsch E."/>
            <person name="Rutherford K.M."/>
            <person name="Thomson N.R."/>
            <person name="Unwin L."/>
            <person name="Whitehead S."/>
            <person name="Barrell B.G."/>
            <person name="Parkhill J."/>
        </authorList>
    </citation>
    <scope>NUCLEOTIDE SEQUENCE [LARGE SCALE GENOMIC DNA]</scope>
    <source>
        <strain>ATCC 700971 / NCTC 13129 / Biotype gravis</strain>
    </source>
</reference>
<proteinExistence type="inferred from homology"/>
<organism>
    <name type="scientific">Corynebacterium diphtheriae (strain ATCC 700971 / NCTC 13129 / Biotype gravis)</name>
    <dbReference type="NCBI Taxonomy" id="257309"/>
    <lineage>
        <taxon>Bacteria</taxon>
        <taxon>Bacillati</taxon>
        <taxon>Actinomycetota</taxon>
        <taxon>Actinomycetes</taxon>
        <taxon>Mycobacteriales</taxon>
        <taxon>Corynebacteriaceae</taxon>
        <taxon>Corynebacterium</taxon>
    </lineage>
</organism>
<dbReference type="EC" id="4.3.3.6" evidence="1"/>
<dbReference type="EC" id="3.5.1.2" evidence="1"/>
<dbReference type="EMBL" id="BX248354">
    <property type="protein sequence ID" value="CAE48734.1"/>
    <property type="molecule type" value="Genomic_DNA"/>
</dbReference>
<dbReference type="RefSeq" id="WP_010934127.1">
    <property type="nucleotide sequence ID" value="NC_002935.2"/>
</dbReference>
<dbReference type="SMR" id="Q6NK10"/>
<dbReference type="STRING" id="257309.DIP0228"/>
<dbReference type="MEROPS" id="C26.A32"/>
<dbReference type="KEGG" id="cdi:DIP0228"/>
<dbReference type="HOGENOM" id="CLU_069674_2_0_11"/>
<dbReference type="UniPathway" id="UPA00245"/>
<dbReference type="Proteomes" id="UP000002198">
    <property type="component" value="Chromosome"/>
</dbReference>
<dbReference type="GO" id="GO:0005829">
    <property type="term" value="C:cytosol"/>
    <property type="evidence" value="ECO:0007669"/>
    <property type="project" value="TreeGrafter"/>
</dbReference>
<dbReference type="GO" id="GO:1903600">
    <property type="term" value="C:glutaminase complex"/>
    <property type="evidence" value="ECO:0007669"/>
    <property type="project" value="TreeGrafter"/>
</dbReference>
<dbReference type="GO" id="GO:0004359">
    <property type="term" value="F:glutaminase activity"/>
    <property type="evidence" value="ECO:0007669"/>
    <property type="project" value="UniProtKB-UniRule"/>
</dbReference>
<dbReference type="GO" id="GO:0036381">
    <property type="term" value="F:pyridoxal 5'-phosphate synthase (glutamine hydrolysing) activity"/>
    <property type="evidence" value="ECO:0007669"/>
    <property type="project" value="UniProtKB-UniRule"/>
</dbReference>
<dbReference type="GO" id="GO:0006543">
    <property type="term" value="P:glutamine catabolic process"/>
    <property type="evidence" value="ECO:0007669"/>
    <property type="project" value="UniProtKB-UniRule"/>
</dbReference>
<dbReference type="GO" id="GO:0042823">
    <property type="term" value="P:pyridoxal phosphate biosynthetic process"/>
    <property type="evidence" value="ECO:0007669"/>
    <property type="project" value="UniProtKB-UniRule"/>
</dbReference>
<dbReference type="GO" id="GO:0008614">
    <property type="term" value="P:pyridoxine metabolic process"/>
    <property type="evidence" value="ECO:0007669"/>
    <property type="project" value="TreeGrafter"/>
</dbReference>
<dbReference type="CDD" id="cd01749">
    <property type="entry name" value="GATase1_PB"/>
    <property type="match status" value="1"/>
</dbReference>
<dbReference type="FunFam" id="3.40.50.880:FF:000010">
    <property type="entry name" value="uncharacterized protein LOC100176842 isoform X2"/>
    <property type="match status" value="1"/>
</dbReference>
<dbReference type="Gene3D" id="3.40.50.880">
    <property type="match status" value="1"/>
</dbReference>
<dbReference type="HAMAP" id="MF_01615">
    <property type="entry name" value="PdxT"/>
    <property type="match status" value="1"/>
</dbReference>
<dbReference type="InterPro" id="IPR029062">
    <property type="entry name" value="Class_I_gatase-like"/>
</dbReference>
<dbReference type="InterPro" id="IPR002161">
    <property type="entry name" value="PdxT/SNO"/>
</dbReference>
<dbReference type="InterPro" id="IPR021196">
    <property type="entry name" value="PdxT/SNO_CS"/>
</dbReference>
<dbReference type="NCBIfam" id="TIGR03800">
    <property type="entry name" value="PLP_synth_Pdx2"/>
    <property type="match status" value="1"/>
</dbReference>
<dbReference type="PANTHER" id="PTHR31559">
    <property type="entry name" value="PYRIDOXAL 5'-PHOSPHATE SYNTHASE SUBUNIT SNO"/>
    <property type="match status" value="1"/>
</dbReference>
<dbReference type="PANTHER" id="PTHR31559:SF0">
    <property type="entry name" value="PYRIDOXAL 5'-PHOSPHATE SYNTHASE SUBUNIT SNO1-RELATED"/>
    <property type="match status" value="1"/>
</dbReference>
<dbReference type="Pfam" id="PF01174">
    <property type="entry name" value="SNO"/>
    <property type="match status" value="1"/>
</dbReference>
<dbReference type="PIRSF" id="PIRSF005639">
    <property type="entry name" value="Glut_amidoT_SNO"/>
    <property type="match status" value="1"/>
</dbReference>
<dbReference type="SUPFAM" id="SSF52317">
    <property type="entry name" value="Class I glutamine amidotransferase-like"/>
    <property type="match status" value="1"/>
</dbReference>
<dbReference type="PROSITE" id="PS01236">
    <property type="entry name" value="PDXT_SNO_1"/>
    <property type="match status" value="1"/>
</dbReference>
<dbReference type="PROSITE" id="PS51130">
    <property type="entry name" value="PDXT_SNO_2"/>
    <property type="match status" value="1"/>
</dbReference>
<evidence type="ECO:0000255" key="1">
    <source>
        <dbReference type="HAMAP-Rule" id="MF_01615"/>
    </source>
</evidence>